<accession>Q07ZS6</accession>
<name>UVRC_SHEFN</name>
<dbReference type="EMBL" id="CP000447">
    <property type="protein sequence ID" value="ABI72489.1"/>
    <property type="molecule type" value="Genomic_DNA"/>
</dbReference>
<dbReference type="RefSeq" id="WP_011638097.1">
    <property type="nucleotide sequence ID" value="NC_008345.1"/>
</dbReference>
<dbReference type="SMR" id="Q07ZS6"/>
<dbReference type="STRING" id="318167.Sfri_2648"/>
<dbReference type="KEGG" id="sfr:Sfri_2648"/>
<dbReference type="eggNOG" id="COG0322">
    <property type="taxonomic scope" value="Bacteria"/>
</dbReference>
<dbReference type="HOGENOM" id="CLU_014841_3_0_6"/>
<dbReference type="OrthoDB" id="9804933at2"/>
<dbReference type="Proteomes" id="UP000000684">
    <property type="component" value="Chromosome"/>
</dbReference>
<dbReference type="GO" id="GO:0005737">
    <property type="term" value="C:cytoplasm"/>
    <property type="evidence" value="ECO:0007669"/>
    <property type="project" value="UniProtKB-SubCell"/>
</dbReference>
<dbReference type="GO" id="GO:0009380">
    <property type="term" value="C:excinuclease repair complex"/>
    <property type="evidence" value="ECO:0007669"/>
    <property type="project" value="InterPro"/>
</dbReference>
<dbReference type="GO" id="GO:0003677">
    <property type="term" value="F:DNA binding"/>
    <property type="evidence" value="ECO:0007669"/>
    <property type="project" value="UniProtKB-UniRule"/>
</dbReference>
<dbReference type="GO" id="GO:0009381">
    <property type="term" value="F:excinuclease ABC activity"/>
    <property type="evidence" value="ECO:0007669"/>
    <property type="project" value="UniProtKB-UniRule"/>
</dbReference>
<dbReference type="GO" id="GO:0006289">
    <property type="term" value="P:nucleotide-excision repair"/>
    <property type="evidence" value="ECO:0007669"/>
    <property type="project" value="UniProtKB-UniRule"/>
</dbReference>
<dbReference type="GO" id="GO:0009432">
    <property type="term" value="P:SOS response"/>
    <property type="evidence" value="ECO:0007669"/>
    <property type="project" value="UniProtKB-UniRule"/>
</dbReference>
<dbReference type="CDD" id="cd10434">
    <property type="entry name" value="GIY-YIG_UvrC_Cho"/>
    <property type="match status" value="1"/>
</dbReference>
<dbReference type="FunFam" id="1.10.150.20:FF:000005">
    <property type="entry name" value="UvrABC system protein C"/>
    <property type="match status" value="1"/>
</dbReference>
<dbReference type="FunFam" id="3.30.420.340:FF:000001">
    <property type="entry name" value="UvrABC system protein C"/>
    <property type="match status" value="1"/>
</dbReference>
<dbReference type="FunFam" id="3.40.1440.10:FF:000001">
    <property type="entry name" value="UvrABC system protein C"/>
    <property type="match status" value="1"/>
</dbReference>
<dbReference type="FunFam" id="4.10.860.10:FF:000002">
    <property type="entry name" value="UvrABC system protein C"/>
    <property type="match status" value="1"/>
</dbReference>
<dbReference type="Gene3D" id="1.10.150.20">
    <property type="entry name" value="5' to 3' exonuclease, C-terminal subdomain"/>
    <property type="match status" value="1"/>
</dbReference>
<dbReference type="Gene3D" id="3.40.1440.10">
    <property type="entry name" value="GIY-YIG endonuclease"/>
    <property type="match status" value="1"/>
</dbReference>
<dbReference type="Gene3D" id="4.10.860.10">
    <property type="entry name" value="UVR domain"/>
    <property type="match status" value="1"/>
</dbReference>
<dbReference type="Gene3D" id="3.30.420.340">
    <property type="entry name" value="UvrC, RNAse H endonuclease domain"/>
    <property type="match status" value="1"/>
</dbReference>
<dbReference type="HAMAP" id="MF_00203">
    <property type="entry name" value="UvrC"/>
    <property type="match status" value="1"/>
</dbReference>
<dbReference type="InterPro" id="IPR000305">
    <property type="entry name" value="GIY-YIG_endonuc"/>
</dbReference>
<dbReference type="InterPro" id="IPR035901">
    <property type="entry name" value="GIY-YIG_endonuc_sf"/>
</dbReference>
<dbReference type="InterPro" id="IPR047296">
    <property type="entry name" value="GIY-YIG_UvrC_Cho"/>
</dbReference>
<dbReference type="InterPro" id="IPR003583">
    <property type="entry name" value="Hlx-hairpin-Hlx_DNA-bd_motif"/>
</dbReference>
<dbReference type="InterPro" id="IPR010994">
    <property type="entry name" value="RuvA_2-like"/>
</dbReference>
<dbReference type="InterPro" id="IPR001943">
    <property type="entry name" value="UVR_dom"/>
</dbReference>
<dbReference type="InterPro" id="IPR036876">
    <property type="entry name" value="UVR_dom_sf"/>
</dbReference>
<dbReference type="InterPro" id="IPR050066">
    <property type="entry name" value="UvrABC_protein_C"/>
</dbReference>
<dbReference type="InterPro" id="IPR004791">
    <property type="entry name" value="UvrC"/>
</dbReference>
<dbReference type="InterPro" id="IPR001162">
    <property type="entry name" value="UvrC_RNase_H_dom"/>
</dbReference>
<dbReference type="InterPro" id="IPR038476">
    <property type="entry name" value="UvrC_RNase_H_dom_sf"/>
</dbReference>
<dbReference type="NCBIfam" id="NF001824">
    <property type="entry name" value="PRK00558.1-5"/>
    <property type="match status" value="1"/>
</dbReference>
<dbReference type="NCBIfam" id="TIGR00194">
    <property type="entry name" value="uvrC"/>
    <property type="match status" value="1"/>
</dbReference>
<dbReference type="PANTHER" id="PTHR30562:SF1">
    <property type="entry name" value="UVRABC SYSTEM PROTEIN C"/>
    <property type="match status" value="1"/>
</dbReference>
<dbReference type="PANTHER" id="PTHR30562">
    <property type="entry name" value="UVRC/OXIDOREDUCTASE"/>
    <property type="match status" value="1"/>
</dbReference>
<dbReference type="Pfam" id="PF01541">
    <property type="entry name" value="GIY-YIG"/>
    <property type="match status" value="1"/>
</dbReference>
<dbReference type="Pfam" id="PF14520">
    <property type="entry name" value="HHH_5"/>
    <property type="match status" value="1"/>
</dbReference>
<dbReference type="Pfam" id="PF02151">
    <property type="entry name" value="UVR"/>
    <property type="match status" value="1"/>
</dbReference>
<dbReference type="Pfam" id="PF22920">
    <property type="entry name" value="UvrC_RNaseH"/>
    <property type="match status" value="1"/>
</dbReference>
<dbReference type="Pfam" id="PF08459">
    <property type="entry name" value="UvrC_RNaseH_dom"/>
    <property type="match status" value="1"/>
</dbReference>
<dbReference type="SMART" id="SM00465">
    <property type="entry name" value="GIYc"/>
    <property type="match status" value="1"/>
</dbReference>
<dbReference type="SMART" id="SM00278">
    <property type="entry name" value="HhH1"/>
    <property type="match status" value="2"/>
</dbReference>
<dbReference type="SUPFAM" id="SSF46600">
    <property type="entry name" value="C-terminal UvrC-binding domain of UvrB"/>
    <property type="match status" value="1"/>
</dbReference>
<dbReference type="SUPFAM" id="SSF82771">
    <property type="entry name" value="GIY-YIG endonuclease"/>
    <property type="match status" value="1"/>
</dbReference>
<dbReference type="SUPFAM" id="SSF47781">
    <property type="entry name" value="RuvA domain 2-like"/>
    <property type="match status" value="1"/>
</dbReference>
<dbReference type="PROSITE" id="PS50164">
    <property type="entry name" value="GIY_YIG"/>
    <property type="match status" value="1"/>
</dbReference>
<dbReference type="PROSITE" id="PS50151">
    <property type="entry name" value="UVR"/>
    <property type="match status" value="1"/>
</dbReference>
<dbReference type="PROSITE" id="PS50165">
    <property type="entry name" value="UVRC"/>
    <property type="match status" value="1"/>
</dbReference>
<keyword id="KW-0963">Cytoplasm</keyword>
<keyword id="KW-0227">DNA damage</keyword>
<keyword id="KW-0228">DNA excision</keyword>
<keyword id="KW-0234">DNA repair</keyword>
<keyword id="KW-0267">Excision nuclease</keyword>
<keyword id="KW-1185">Reference proteome</keyword>
<keyword id="KW-0742">SOS response</keyword>
<comment type="function">
    <text evidence="1">The UvrABC repair system catalyzes the recognition and processing of DNA lesions. UvrC both incises the 5' and 3' sides of the lesion. The N-terminal half is responsible for the 3' incision and the C-terminal half is responsible for the 5' incision.</text>
</comment>
<comment type="subunit">
    <text evidence="1">Interacts with UvrB in an incision complex.</text>
</comment>
<comment type="subcellular location">
    <subcellularLocation>
        <location evidence="1">Cytoplasm</location>
    </subcellularLocation>
</comment>
<comment type="similarity">
    <text evidence="1">Belongs to the UvrC family.</text>
</comment>
<protein>
    <recommendedName>
        <fullName evidence="1">UvrABC system protein C</fullName>
        <shortName evidence="1">Protein UvrC</shortName>
    </recommendedName>
    <alternativeName>
        <fullName evidence="1">Excinuclease ABC subunit C</fullName>
    </alternativeName>
</protein>
<sequence length="610" mass="68647">MPSGFNAKSFLKNVTSAPGVYRMYDKHQQVIYVGKAKDLKKRLSSYFRVNIANVKTQALVSHIDHIDVTVTHSETDALLLENDYIKQYMPKYNVLLRDDKSYPYILLSGHKHPRLAYHRGPKREKGHYFGPYPNGGAVRESLHLIQKLFPIRQCDDLYYKSRSRPCLQYQLDRCSAPCVGIVSDDEYSEQVKLAGLFLRGKDKQVISQLVAKMETAAIDMEYERAAQYRDQITALRRVAEQQEVSNHKGDMDVIGVDYASGIACFHLLFIRDGKIFGSRSYYPSVPAETEIEEVLSSFLGQFYLNADIQRTIPKEVILSHHFDGITELQASIEHALDKKFELKTQVRGDRANFLRLAMTNASNAVATKLSHKNTVEQRFQLLEEALELNEPIKRMECFDISHTMGESTVASCVVFNREGPHKADYRRYNITGITGGDDYAAMEQAISRRFDKIDNNGKVPDLVFIDGGIGQLRVAQTIVDEKCVNIDHPPLLICVTKGEGRKAGLETFTVGGSEQTFEVASDSPAFHLMLHIRDESHRFAITGHRNKRQKTRNTSTLESIAGVGPKRRKALLQHLGGIQEVKGASVAELTKVPGISLEMAQTIHDALRGG</sequence>
<evidence type="ECO:0000255" key="1">
    <source>
        <dbReference type="HAMAP-Rule" id="MF_00203"/>
    </source>
</evidence>
<organism>
    <name type="scientific">Shewanella frigidimarina (strain NCIMB 400)</name>
    <dbReference type="NCBI Taxonomy" id="318167"/>
    <lineage>
        <taxon>Bacteria</taxon>
        <taxon>Pseudomonadati</taxon>
        <taxon>Pseudomonadota</taxon>
        <taxon>Gammaproteobacteria</taxon>
        <taxon>Alteromonadales</taxon>
        <taxon>Shewanellaceae</taxon>
        <taxon>Shewanella</taxon>
    </lineage>
</organism>
<feature type="chain" id="PRO_0000264946" description="UvrABC system protein C">
    <location>
        <begin position="1"/>
        <end position="610"/>
    </location>
</feature>
<feature type="domain" description="GIY-YIG" evidence="1">
    <location>
        <begin position="16"/>
        <end position="94"/>
    </location>
</feature>
<feature type="domain" description="UVR" evidence="1">
    <location>
        <begin position="203"/>
        <end position="238"/>
    </location>
</feature>
<reference key="1">
    <citation type="submission" date="2006-08" db="EMBL/GenBank/DDBJ databases">
        <title>Complete sequence of Shewanella frigidimarina NCIMB 400.</title>
        <authorList>
            <consortium name="US DOE Joint Genome Institute"/>
            <person name="Copeland A."/>
            <person name="Lucas S."/>
            <person name="Lapidus A."/>
            <person name="Barry K."/>
            <person name="Detter J.C."/>
            <person name="Glavina del Rio T."/>
            <person name="Hammon N."/>
            <person name="Israni S."/>
            <person name="Dalin E."/>
            <person name="Tice H."/>
            <person name="Pitluck S."/>
            <person name="Fredrickson J.K."/>
            <person name="Kolker E."/>
            <person name="McCuel L.A."/>
            <person name="DiChristina T."/>
            <person name="Nealson K.H."/>
            <person name="Newman D."/>
            <person name="Tiedje J.M."/>
            <person name="Zhou J."/>
            <person name="Romine M.F."/>
            <person name="Culley D.E."/>
            <person name="Serres M."/>
            <person name="Chertkov O."/>
            <person name="Brettin T."/>
            <person name="Bruce D."/>
            <person name="Han C."/>
            <person name="Tapia R."/>
            <person name="Gilna P."/>
            <person name="Schmutz J."/>
            <person name="Larimer F."/>
            <person name="Land M."/>
            <person name="Hauser L."/>
            <person name="Kyrpides N."/>
            <person name="Mikhailova N."/>
            <person name="Richardson P."/>
        </authorList>
    </citation>
    <scope>NUCLEOTIDE SEQUENCE [LARGE SCALE GENOMIC DNA]</scope>
    <source>
        <strain>NCIMB 400</strain>
    </source>
</reference>
<gene>
    <name evidence="1" type="primary">uvrC</name>
    <name type="ordered locus">Sfri_2648</name>
</gene>
<proteinExistence type="inferred from homology"/>